<evidence type="ECO:0000255" key="1">
    <source>
        <dbReference type="HAMAP-Rule" id="MF_01325"/>
    </source>
</evidence>
<evidence type="ECO:0000256" key="2">
    <source>
        <dbReference type="SAM" id="MobiDB-lite"/>
    </source>
</evidence>
<evidence type="ECO:0000305" key="3"/>
<name>RL3_PARXL</name>
<keyword id="KW-0488">Methylation</keyword>
<keyword id="KW-1185">Reference proteome</keyword>
<keyword id="KW-0687">Ribonucleoprotein</keyword>
<keyword id="KW-0689">Ribosomal protein</keyword>
<keyword id="KW-0694">RNA-binding</keyword>
<keyword id="KW-0699">rRNA-binding</keyword>
<dbReference type="EMBL" id="CP000270">
    <property type="protein sequence ID" value="ABE32619.1"/>
    <property type="molecule type" value="Genomic_DNA"/>
</dbReference>
<dbReference type="RefSeq" id="WP_007180137.1">
    <property type="nucleotide sequence ID" value="NZ_CP008760.1"/>
</dbReference>
<dbReference type="SMR" id="Q13TH0"/>
<dbReference type="STRING" id="266265.Bxe_A0314"/>
<dbReference type="GeneID" id="97055892"/>
<dbReference type="KEGG" id="bxb:DR64_2484"/>
<dbReference type="KEGG" id="bxe:Bxe_A0314"/>
<dbReference type="eggNOG" id="COG0087">
    <property type="taxonomic scope" value="Bacteria"/>
</dbReference>
<dbReference type="OrthoDB" id="9806135at2"/>
<dbReference type="Proteomes" id="UP000001817">
    <property type="component" value="Chromosome 1"/>
</dbReference>
<dbReference type="GO" id="GO:0022625">
    <property type="term" value="C:cytosolic large ribosomal subunit"/>
    <property type="evidence" value="ECO:0007669"/>
    <property type="project" value="TreeGrafter"/>
</dbReference>
<dbReference type="GO" id="GO:0019843">
    <property type="term" value="F:rRNA binding"/>
    <property type="evidence" value="ECO:0007669"/>
    <property type="project" value="UniProtKB-UniRule"/>
</dbReference>
<dbReference type="GO" id="GO:0003735">
    <property type="term" value="F:structural constituent of ribosome"/>
    <property type="evidence" value="ECO:0007669"/>
    <property type="project" value="InterPro"/>
</dbReference>
<dbReference type="GO" id="GO:0006412">
    <property type="term" value="P:translation"/>
    <property type="evidence" value="ECO:0007669"/>
    <property type="project" value="UniProtKB-UniRule"/>
</dbReference>
<dbReference type="FunFam" id="2.40.30.10:FF:000004">
    <property type="entry name" value="50S ribosomal protein L3"/>
    <property type="match status" value="1"/>
</dbReference>
<dbReference type="FunFam" id="3.30.160.810:FF:000001">
    <property type="entry name" value="50S ribosomal protein L3"/>
    <property type="match status" value="1"/>
</dbReference>
<dbReference type="Gene3D" id="3.30.160.810">
    <property type="match status" value="1"/>
</dbReference>
<dbReference type="Gene3D" id="2.40.30.10">
    <property type="entry name" value="Translation factors"/>
    <property type="match status" value="1"/>
</dbReference>
<dbReference type="HAMAP" id="MF_01325_B">
    <property type="entry name" value="Ribosomal_uL3_B"/>
    <property type="match status" value="1"/>
</dbReference>
<dbReference type="InterPro" id="IPR000597">
    <property type="entry name" value="Ribosomal_uL3"/>
</dbReference>
<dbReference type="InterPro" id="IPR019927">
    <property type="entry name" value="Ribosomal_uL3_bac/org-type"/>
</dbReference>
<dbReference type="InterPro" id="IPR019926">
    <property type="entry name" value="Ribosomal_uL3_CS"/>
</dbReference>
<dbReference type="InterPro" id="IPR009000">
    <property type="entry name" value="Transl_B-barrel_sf"/>
</dbReference>
<dbReference type="NCBIfam" id="TIGR03625">
    <property type="entry name" value="L3_bact"/>
    <property type="match status" value="1"/>
</dbReference>
<dbReference type="PANTHER" id="PTHR11229">
    <property type="entry name" value="50S RIBOSOMAL PROTEIN L3"/>
    <property type="match status" value="1"/>
</dbReference>
<dbReference type="PANTHER" id="PTHR11229:SF16">
    <property type="entry name" value="LARGE RIBOSOMAL SUBUNIT PROTEIN UL3C"/>
    <property type="match status" value="1"/>
</dbReference>
<dbReference type="Pfam" id="PF00297">
    <property type="entry name" value="Ribosomal_L3"/>
    <property type="match status" value="1"/>
</dbReference>
<dbReference type="SUPFAM" id="SSF50447">
    <property type="entry name" value="Translation proteins"/>
    <property type="match status" value="1"/>
</dbReference>
<dbReference type="PROSITE" id="PS00474">
    <property type="entry name" value="RIBOSOMAL_L3"/>
    <property type="match status" value="1"/>
</dbReference>
<organism>
    <name type="scientific">Paraburkholderia xenovorans (strain LB400)</name>
    <dbReference type="NCBI Taxonomy" id="266265"/>
    <lineage>
        <taxon>Bacteria</taxon>
        <taxon>Pseudomonadati</taxon>
        <taxon>Pseudomonadota</taxon>
        <taxon>Betaproteobacteria</taxon>
        <taxon>Burkholderiales</taxon>
        <taxon>Burkholderiaceae</taxon>
        <taxon>Paraburkholderia</taxon>
    </lineage>
</organism>
<accession>Q13TH0</accession>
<sequence>MSLGLVGRKVGMTRIFTAEGDSIPVTVLDVSDNRVTQIKTVETDGYTAVQVAFGTRRASRVTKPLAGHLAKAGVQAGEILKEFQIDAAKAAELSNGTVVGPDLFEVGQKVDVQGVSIGKGYAGTIKRYNFASGRASHGNSRSHNVPGSIGMAQDPGRVFPGKRMTGHMGDDTVTVQNLEIARIDADRKLLLVKGAVPGAKGGKVFVTPAVKTRAVKGAK</sequence>
<feature type="chain" id="PRO_1000052027" description="Large ribosomal subunit protein uL3">
    <location>
        <begin position="1"/>
        <end position="219"/>
    </location>
</feature>
<feature type="region of interest" description="Disordered" evidence="2">
    <location>
        <begin position="134"/>
        <end position="153"/>
    </location>
</feature>
<feature type="modified residue" description="N5-methylglutamine" evidence="1">
    <location>
        <position position="153"/>
    </location>
</feature>
<comment type="function">
    <text evidence="1">One of the primary rRNA binding proteins, it binds directly near the 3'-end of the 23S rRNA, where it nucleates assembly of the 50S subunit.</text>
</comment>
<comment type="subunit">
    <text evidence="1">Part of the 50S ribosomal subunit. Forms a cluster with proteins L14 and L19.</text>
</comment>
<comment type="PTM">
    <text evidence="1">Methylated by PrmB.</text>
</comment>
<comment type="similarity">
    <text evidence="1">Belongs to the universal ribosomal protein uL3 family.</text>
</comment>
<gene>
    <name evidence="1" type="primary">rplC</name>
    <name type="ordered locus">Bxeno_A4081</name>
    <name type="ORF">Bxe_A0314</name>
</gene>
<proteinExistence type="inferred from homology"/>
<protein>
    <recommendedName>
        <fullName evidence="1">Large ribosomal subunit protein uL3</fullName>
    </recommendedName>
    <alternativeName>
        <fullName evidence="3">50S ribosomal protein L3</fullName>
    </alternativeName>
</protein>
<reference key="1">
    <citation type="journal article" date="2006" name="Proc. Natl. Acad. Sci. U.S.A.">
        <title>Burkholderia xenovorans LB400 harbors a multi-replicon, 9.73-Mbp genome shaped for versatility.</title>
        <authorList>
            <person name="Chain P.S.G."/>
            <person name="Denef V.J."/>
            <person name="Konstantinidis K.T."/>
            <person name="Vergez L.M."/>
            <person name="Agullo L."/>
            <person name="Reyes V.L."/>
            <person name="Hauser L."/>
            <person name="Cordova M."/>
            <person name="Gomez L."/>
            <person name="Gonzalez M."/>
            <person name="Land M."/>
            <person name="Lao V."/>
            <person name="Larimer F."/>
            <person name="LiPuma J.J."/>
            <person name="Mahenthiralingam E."/>
            <person name="Malfatti S.A."/>
            <person name="Marx C.J."/>
            <person name="Parnell J.J."/>
            <person name="Ramette A."/>
            <person name="Richardson P."/>
            <person name="Seeger M."/>
            <person name="Smith D."/>
            <person name="Spilker T."/>
            <person name="Sul W.J."/>
            <person name="Tsoi T.V."/>
            <person name="Ulrich L.E."/>
            <person name="Zhulin I.B."/>
            <person name="Tiedje J.M."/>
        </authorList>
    </citation>
    <scope>NUCLEOTIDE SEQUENCE [LARGE SCALE GENOMIC DNA]</scope>
    <source>
        <strain>LB400</strain>
    </source>
</reference>